<sequence length="675" mass="75636">MAQVAKKILVTCALPYANGSIHLGHMLEHIQADIWVRFQRMRGNQVHFICADDAHGTPIMLKAQQMGIEPEQMIAEMSQEHQQDFAGFAISYDNYHSTHSDENRELSSLIYGRLKANGYIKNRTISQLYDPEKGMFLPDRFVKGTCPKCKAPEQYGDNCEVCGATYSPTELIDPKSAVSGATPVMRESEHFFFDLPAFSDMLQAWTRSGALQEQVANKMQEWFDSGLQQWDITRDAPYFGFEVPDAPGKYFYVWLDAPIGYMGAFKNLCDKRGDLDFDEFWGKDAKTDLYHFIGKDIVYFHSLFWPAMLEGSNFRKPTNLFVHGYVTVNGAKMSKSRGTFIKAGTYLKYLDADCLRYYYAAKLSSRIDDIDLNLEDFVQRVNADIVNKVVNLASRNAGFINKRFAGQLADQLADPVLYKTFTDAATSIADAYNNRESGKAIREIMALADVANRYVDEQAPWVVAKQEGRDADLHAICSMGINLFRVLMTYLKPVLPSLTERTEAFLNTELTWDSIEQPLLGHSITAFKALFNRIDLDKVNEMVASSKEDMAPATRVTGPLADDPIQETISFDDFAKVDMRIALIQQAEFVEGSDKLLKLTLELGGETRQVFSGIRSAYPDPKALEGRMTVMVANLAPRKMRFGVSEGMVMAAGPGGSDIFLLSPDSGAQPGMQVK</sequence>
<proteinExistence type="inferred from homology"/>
<keyword id="KW-0030">Aminoacyl-tRNA synthetase</keyword>
<keyword id="KW-0067">ATP-binding</keyword>
<keyword id="KW-0963">Cytoplasm</keyword>
<keyword id="KW-0436">Ligase</keyword>
<keyword id="KW-0479">Metal-binding</keyword>
<keyword id="KW-0547">Nucleotide-binding</keyword>
<keyword id="KW-0648">Protein biosynthesis</keyword>
<keyword id="KW-0694">RNA-binding</keyword>
<keyword id="KW-0820">tRNA-binding</keyword>
<keyword id="KW-0862">Zinc</keyword>
<accession>Q1CGU4</accession>
<accession>C4GVE0</accession>
<comment type="function">
    <text evidence="1">Is required not only for elongation of protein synthesis but also for the initiation of all mRNA translation through initiator tRNA(fMet) aminoacylation.</text>
</comment>
<comment type="catalytic activity">
    <reaction evidence="1">
        <text>tRNA(Met) + L-methionine + ATP = L-methionyl-tRNA(Met) + AMP + diphosphate</text>
        <dbReference type="Rhea" id="RHEA:13481"/>
        <dbReference type="Rhea" id="RHEA-COMP:9667"/>
        <dbReference type="Rhea" id="RHEA-COMP:9698"/>
        <dbReference type="ChEBI" id="CHEBI:30616"/>
        <dbReference type="ChEBI" id="CHEBI:33019"/>
        <dbReference type="ChEBI" id="CHEBI:57844"/>
        <dbReference type="ChEBI" id="CHEBI:78442"/>
        <dbReference type="ChEBI" id="CHEBI:78530"/>
        <dbReference type="ChEBI" id="CHEBI:456215"/>
        <dbReference type="EC" id="6.1.1.10"/>
    </reaction>
</comment>
<comment type="cofactor">
    <cofactor evidence="1">
        <name>Zn(2+)</name>
        <dbReference type="ChEBI" id="CHEBI:29105"/>
    </cofactor>
    <text evidence="1">Binds 1 zinc ion per subunit.</text>
</comment>
<comment type="subunit">
    <text evidence="1">Homodimer.</text>
</comment>
<comment type="subcellular location">
    <subcellularLocation>
        <location evidence="1">Cytoplasm</location>
    </subcellularLocation>
</comment>
<comment type="similarity">
    <text evidence="1">Belongs to the class-I aminoacyl-tRNA synthetase family. MetG type 1 subfamily.</text>
</comment>
<evidence type="ECO:0000255" key="1">
    <source>
        <dbReference type="HAMAP-Rule" id="MF_00098"/>
    </source>
</evidence>
<gene>
    <name evidence="1" type="primary">metG</name>
    <name type="ordered locus">YPN_2458</name>
    <name type="ORF">YP516_2769</name>
</gene>
<dbReference type="EC" id="6.1.1.10" evidence="1"/>
<dbReference type="EMBL" id="CP000305">
    <property type="protein sequence ID" value="ABG18786.1"/>
    <property type="molecule type" value="Genomic_DNA"/>
</dbReference>
<dbReference type="EMBL" id="ACNQ01000014">
    <property type="protein sequence ID" value="EEO76024.1"/>
    <property type="molecule type" value="Genomic_DNA"/>
</dbReference>
<dbReference type="RefSeq" id="WP_002211870.1">
    <property type="nucleotide sequence ID" value="NZ_ACNQ01000014.1"/>
</dbReference>
<dbReference type="SMR" id="Q1CGU4"/>
<dbReference type="GeneID" id="57977046"/>
<dbReference type="KEGG" id="ypn:YPN_2458"/>
<dbReference type="HOGENOM" id="CLU_009710_7_0_6"/>
<dbReference type="Proteomes" id="UP000008936">
    <property type="component" value="Chromosome"/>
</dbReference>
<dbReference type="GO" id="GO:0005829">
    <property type="term" value="C:cytosol"/>
    <property type="evidence" value="ECO:0007669"/>
    <property type="project" value="TreeGrafter"/>
</dbReference>
<dbReference type="GO" id="GO:0005524">
    <property type="term" value="F:ATP binding"/>
    <property type="evidence" value="ECO:0007669"/>
    <property type="project" value="UniProtKB-UniRule"/>
</dbReference>
<dbReference type="GO" id="GO:0046872">
    <property type="term" value="F:metal ion binding"/>
    <property type="evidence" value="ECO:0007669"/>
    <property type="project" value="UniProtKB-KW"/>
</dbReference>
<dbReference type="GO" id="GO:0004825">
    <property type="term" value="F:methionine-tRNA ligase activity"/>
    <property type="evidence" value="ECO:0007669"/>
    <property type="project" value="UniProtKB-UniRule"/>
</dbReference>
<dbReference type="GO" id="GO:0000049">
    <property type="term" value="F:tRNA binding"/>
    <property type="evidence" value="ECO:0007669"/>
    <property type="project" value="UniProtKB-KW"/>
</dbReference>
<dbReference type="GO" id="GO:0006431">
    <property type="term" value="P:methionyl-tRNA aminoacylation"/>
    <property type="evidence" value="ECO:0007669"/>
    <property type="project" value="UniProtKB-UniRule"/>
</dbReference>
<dbReference type="CDD" id="cd07957">
    <property type="entry name" value="Anticodon_Ia_Met"/>
    <property type="match status" value="1"/>
</dbReference>
<dbReference type="CDD" id="cd00814">
    <property type="entry name" value="MetRS_core"/>
    <property type="match status" value="1"/>
</dbReference>
<dbReference type="CDD" id="cd02800">
    <property type="entry name" value="tRNA_bind_EcMetRS_like"/>
    <property type="match status" value="1"/>
</dbReference>
<dbReference type="FunFam" id="1.10.730.10:FF:000005">
    <property type="entry name" value="Methionine--tRNA ligase"/>
    <property type="match status" value="1"/>
</dbReference>
<dbReference type="FunFam" id="2.20.28.20:FF:000001">
    <property type="entry name" value="Methionine--tRNA ligase"/>
    <property type="match status" value="1"/>
</dbReference>
<dbReference type="FunFam" id="2.40.50.140:FF:000042">
    <property type="entry name" value="Methionine--tRNA ligase"/>
    <property type="match status" value="1"/>
</dbReference>
<dbReference type="Gene3D" id="3.40.50.620">
    <property type="entry name" value="HUPs"/>
    <property type="match status" value="1"/>
</dbReference>
<dbReference type="Gene3D" id="1.10.730.10">
    <property type="entry name" value="Isoleucyl-tRNA Synthetase, Domain 1"/>
    <property type="match status" value="1"/>
</dbReference>
<dbReference type="Gene3D" id="2.20.28.20">
    <property type="entry name" value="Methionyl-tRNA synthetase, Zn-domain"/>
    <property type="match status" value="1"/>
</dbReference>
<dbReference type="Gene3D" id="2.40.50.140">
    <property type="entry name" value="Nucleic acid-binding proteins"/>
    <property type="match status" value="1"/>
</dbReference>
<dbReference type="HAMAP" id="MF_00098">
    <property type="entry name" value="Met_tRNA_synth_type1"/>
    <property type="match status" value="1"/>
</dbReference>
<dbReference type="InterPro" id="IPR001412">
    <property type="entry name" value="aa-tRNA-synth_I_CS"/>
</dbReference>
<dbReference type="InterPro" id="IPR041872">
    <property type="entry name" value="Anticodon_Met"/>
</dbReference>
<dbReference type="InterPro" id="IPR004495">
    <property type="entry name" value="Met-tRNA-synth_bsu_C"/>
</dbReference>
<dbReference type="InterPro" id="IPR023458">
    <property type="entry name" value="Met-tRNA_ligase_1"/>
</dbReference>
<dbReference type="InterPro" id="IPR014758">
    <property type="entry name" value="Met-tRNA_synth"/>
</dbReference>
<dbReference type="InterPro" id="IPR015413">
    <property type="entry name" value="Methionyl/Leucyl_tRNA_Synth"/>
</dbReference>
<dbReference type="InterPro" id="IPR033911">
    <property type="entry name" value="MetRS_core"/>
</dbReference>
<dbReference type="InterPro" id="IPR029038">
    <property type="entry name" value="MetRS_Zn"/>
</dbReference>
<dbReference type="InterPro" id="IPR012340">
    <property type="entry name" value="NA-bd_OB-fold"/>
</dbReference>
<dbReference type="InterPro" id="IPR014729">
    <property type="entry name" value="Rossmann-like_a/b/a_fold"/>
</dbReference>
<dbReference type="InterPro" id="IPR002547">
    <property type="entry name" value="tRNA-bd_dom"/>
</dbReference>
<dbReference type="InterPro" id="IPR009080">
    <property type="entry name" value="tRNAsynth_Ia_anticodon-bd"/>
</dbReference>
<dbReference type="NCBIfam" id="TIGR00398">
    <property type="entry name" value="metG"/>
    <property type="match status" value="1"/>
</dbReference>
<dbReference type="NCBIfam" id="TIGR00399">
    <property type="entry name" value="metG_C_term"/>
    <property type="match status" value="1"/>
</dbReference>
<dbReference type="NCBIfam" id="NF001100">
    <property type="entry name" value="PRK00133.1"/>
    <property type="match status" value="1"/>
</dbReference>
<dbReference type="PANTHER" id="PTHR45765">
    <property type="entry name" value="METHIONINE--TRNA LIGASE"/>
    <property type="match status" value="1"/>
</dbReference>
<dbReference type="PANTHER" id="PTHR45765:SF1">
    <property type="entry name" value="METHIONINE--TRNA LIGASE, CYTOPLASMIC"/>
    <property type="match status" value="1"/>
</dbReference>
<dbReference type="Pfam" id="PF19303">
    <property type="entry name" value="Anticodon_3"/>
    <property type="match status" value="1"/>
</dbReference>
<dbReference type="Pfam" id="PF09334">
    <property type="entry name" value="tRNA-synt_1g"/>
    <property type="match status" value="1"/>
</dbReference>
<dbReference type="Pfam" id="PF01588">
    <property type="entry name" value="tRNA_bind"/>
    <property type="match status" value="1"/>
</dbReference>
<dbReference type="PRINTS" id="PR01041">
    <property type="entry name" value="TRNASYNTHMET"/>
</dbReference>
<dbReference type="SUPFAM" id="SSF47323">
    <property type="entry name" value="Anticodon-binding domain of a subclass of class I aminoacyl-tRNA synthetases"/>
    <property type="match status" value="1"/>
</dbReference>
<dbReference type="SUPFAM" id="SSF57770">
    <property type="entry name" value="Methionyl-tRNA synthetase (MetRS), Zn-domain"/>
    <property type="match status" value="1"/>
</dbReference>
<dbReference type="SUPFAM" id="SSF50249">
    <property type="entry name" value="Nucleic acid-binding proteins"/>
    <property type="match status" value="1"/>
</dbReference>
<dbReference type="SUPFAM" id="SSF52374">
    <property type="entry name" value="Nucleotidylyl transferase"/>
    <property type="match status" value="1"/>
</dbReference>
<dbReference type="PROSITE" id="PS00178">
    <property type="entry name" value="AA_TRNA_LIGASE_I"/>
    <property type="match status" value="1"/>
</dbReference>
<dbReference type="PROSITE" id="PS50886">
    <property type="entry name" value="TRBD"/>
    <property type="match status" value="1"/>
</dbReference>
<feature type="chain" id="PRO_0000331932" description="Methionine--tRNA ligase">
    <location>
        <begin position="1"/>
        <end position="675"/>
    </location>
</feature>
<feature type="domain" description="tRNA-binding" evidence="1">
    <location>
        <begin position="573"/>
        <end position="675"/>
    </location>
</feature>
<feature type="short sequence motif" description="'HIGH' region">
    <location>
        <begin position="15"/>
        <end position="25"/>
    </location>
</feature>
<feature type="short sequence motif" description="'KMSKS' region">
    <location>
        <begin position="332"/>
        <end position="336"/>
    </location>
</feature>
<feature type="binding site" evidence="1">
    <location>
        <position position="146"/>
    </location>
    <ligand>
        <name>Zn(2+)</name>
        <dbReference type="ChEBI" id="CHEBI:29105"/>
    </ligand>
</feature>
<feature type="binding site" evidence="1">
    <location>
        <position position="149"/>
    </location>
    <ligand>
        <name>Zn(2+)</name>
        <dbReference type="ChEBI" id="CHEBI:29105"/>
    </ligand>
</feature>
<feature type="binding site" evidence="1">
    <location>
        <position position="159"/>
    </location>
    <ligand>
        <name>Zn(2+)</name>
        <dbReference type="ChEBI" id="CHEBI:29105"/>
    </ligand>
</feature>
<feature type="binding site" evidence="1">
    <location>
        <position position="162"/>
    </location>
    <ligand>
        <name>Zn(2+)</name>
        <dbReference type="ChEBI" id="CHEBI:29105"/>
    </ligand>
</feature>
<feature type="binding site" evidence="1">
    <location>
        <position position="335"/>
    </location>
    <ligand>
        <name>ATP</name>
        <dbReference type="ChEBI" id="CHEBI:30616"/>
    </ligand>
</feature>
<reference key="1">
    <citation type="journal article" date="2006" name="J. Bacteriol.">
        <title>Complete genome sequence of Yersinia pestis strains Antiqua and Nepal516: evidence of gene reduction in an emerging pathogen.</title>
        <authorList>
            <person name="Chain P.S.G."/>
            <person name="Hu P."/>
            <person name="Malfatti S.A."/>
            <person name="Radnedge L."/>
            <person name="Larimer F."/>
            <person name="Vergez L.M."/>
            <person name="Worsham P."/>
            <person name="Chu M.C."/>
            <person name="Andersen G.L."/>
        </authorList>
    </citation>
    <scope>NUCLEOTIDE SEQUENCE [LARGE SCALE GENOMIC DNA]</scope>
    <source>
        <strain>Nepal516</strain>
    </source>
</reference>
<reference key="2">
    <citation type="submission" date="2009-04" db="EMBL/GenBank/DDBJ databases">
        <title>Yersinia pestis Nepal516A whole genome shotgun sequencing project.</title>
        <authorList>
            <person name="Plunkett G. III"/>
            <person name="Anderson B.D."/>
            <person name="Baumler D.J."/>
            <person name="Burland V."/>
            <person name="Cabot E.L."/>
            <person name="Glasner J.D."/>
            <person name="Mau B."/>
            <person name="Neeno-Eckwall E."/>
            <person name="Perna N.T."/>
            <person name="Munk A.C."/>
            <person name="Tapia R."/>
            <person name="Green L.D."/>
            <person name="Rogers Y.C."/>
            <person name="Detter J.C."/>
            <person name="Bruce D.C."/>
            <person name="Brettin T.S."/>
        </authorList>
    </citation>
    <scope>NUCLEOTIDE SEQUENCE [LARGE SCALE GENOMIC DNA]</scope>
    <source>
        <strain>Nepal516</strain>
    </source>
</reference>
<protein>
    <recommendedName>
        <fullName evidence="1">Methionine--tRNA ligase</fullName>
        <ecNumber evidence="1">6.1.1.10</ecNumber>
    </recommendedName>
    <alternativeName>
        <fullName evidence="1">Methionyl-tRNA synthetase</fullName>
        <shortName evidence="1">MetRS</shortName>
    </alternativeName>
</protein>
<name>SYM_YERPN</name>
<organism>
    <name type="scientific">Yersinia pestis bv. Antiqua (strain Nepal516)</name>
    <dbReference type="NCBI Taxonomy" id="377628"/>
    <lineage>
        <taxon>Bacteria</taxon>
        <taxon>Pseudomonadati</taxon>
        <taxon>Pseudomonadota</taxon>
        <taxon>Gammaproteobacteria</taxon>
        <taxon>Enterobacterales</taxon>
        <taxon>Yersiniaceae</taxon>
        <taxon>Yersinia</taxon>
    </lineage>
</organism>